<accession>P9WLV3</accession>
<accession>L0T9P3</accession>
<accession>P64867</accession>
<accession>Q50582</accession>
<gene>
    <name type="primary">wbbL2</name>
    <name type="ordered locus">Rv1525</name>
    <name type="ORF">MTCY19G5.03c</name>
</gene>
<name>Y1525_MYCTU</name>
<feature type="chain" id="PRO_0000103870" description="Uncharacterized protein Rv1525">
    <location>
        <begin position="1"/>
        <end position="261"/>
    </location>
</feature>
<protein>
    <recommendedName>
        <fullName>Uncharacterized protein Rv1525</fullName>
    </recommendedName>
</protein>
<proteinExistence type="evidence at protein level"/>
<dbReference type="EMBL" id="AL123456">
    <property type="protein sequence ID" value="CCP44289.1"/>
    <property type="molecule type" value="Genomic_DNA"/>
</dbReference>
<dbReference type="PIR" id="E70723">
    <property type="entry name" value="E70723"/>
</dbReference>
<dbReference type="RefSeq" id="NP_216041.1">
    <property type="nucleotide sequence ID" value="NC_000962.3"/>
</dbReference>
<dbReference type="RefSeq" id="WP_003407672.1">
    <property type="nucleotide sequence ID" value="NZ_NVQJ01000004.1"/>
</dbReference>
<dbReference type="SMR" id="P9WLV3"/>
<dbReference type="STRING" id="83332.Rv1525"/>
<dbReference type="PaxDb" id="83332-Rv1525"/>
<dbReference type="DNASU" id="886470"/>
<dbReference type="GeneID" id="886470"/>
<dbReference type="KEGG" id="mtu:Rv1525"/>
<dbReference type="KEGG" id="mtv:RVBD_1525"/>
<dbReference type="TubercuList" id="Rv1525"/>
<dbReference type="eggNOG" id="COG1216">
    <property type="taxonomic scope" value="Bacteria"/>
</dbReference>
<dbReference type="InParanoid" id="P9WLV3"/>
<dbReference type="OrthoDB" id="9771846at2"/>
<dbReference type="PhylomeDB" id="P9WLV3"/>
<dbReference type="Proteomes" id="UP000001584">
    <property type="component" value="Chromosome"/>
</dbReference>
<dbReference type="CDD" id="cd04186">
    <property type="entry name" value="GT_2_like_c"/>
    <property type="match status" value="1"/>
</dbReference>
<dbReference type="Gene3D" id="3.90.550.10">
    <property type="entry name" value="Spore Coat Polysaccharide Biosynthesis Protein SpsA, Chain A"/>
    <property type="match status" value="1"/>
</dbReference>
<dbReference type="InterPro" id="IPR029044">
    <property type="entry name" value="Nucleotide-diphossugar_trans"/>
</dbReference>
<dbReference type="PANTHER" id="PTHR43179:SF11">
    <property type="entry name" value="GLYCOSYL TRANSFERASE"/>
    <property type="match status" value="1"/>
</dbReference>
<dbReference type="PANTHER" id="PTHR43179">
    <property type="entry name" value="RHAMNOSYLTRANSFERASE WBBL"/>
    <property type="match status" value="1"/>
</dbReference>
<dbReference type="SUPFAM" id="SSF53448">
    <property type="entry name" value="Nucleotide-diphospho-sugar transferases"/>
    <property type="match status" value="1"/>
</dbReference>
<organism>
    <name type="scientific">Mycobacterium tuberculosis (strain ATCC 25618 / H37Rv)</name>
    <dbReference type="NCBI Taxonomy" id="83332"/>
    <lineage>
        <taxon>Bacteria</taxon>
        <taxon>Bacillati</taxon>
        <taxon>Actinomycetota</taxon>
        <taxon>Actinomycetes</taxon>
        <taxon>Mycobacteriales</taxon>
        <taxon>Mycobacteriaceae</taxon>
        <taxon>Mycobacterium</taxon>
        <taxon>Mycobacterium tuberculosis complex</taxon>
    </lineage>
</organism>
<sequence>MYAPLVSLMITVPVFGQHEYTHALVADLEREGADYLIVDNRGDYPRIGTERVSTPGENLGWAGGSELGFRLAFAEGYSHAMTLNNDTRVSKGFVAALLDSRLPADAGMVGPMFDVGFPFAVADEKPDAESYVPRARYRKVPAVEGTALVMSRDCWDAVGGMDLSTFGRYGWGLDLDLALRARKSGYGLYTTEMAYINHFGRKTANTHFGGHRYHWGASAAMIRGLRRTHGWPAAMGILREMGMAHHRKWHKSFPLTCPASC</sequence>
<keyword id="KW-1185">Reference proteome</keyword>
<reference key="1">
    <citation type="journal article" date="1998" name="Nature">
        <title>Deciphering the biology of Mycobacterium tuberculosis from the complete genome sequence.</title>
        <authorList>
            <person name="Cole S.T."/>
            <person name="Brosch R."/>
            <person name="Parkhill J."/>
            <person name="Garnier T."/>
            <person name="Churcher C.M."/>
            <person name="Harris D.E."/>
            <person name="Gordon S.V."/>
            <person name="Eiglmeier K."/>
            <person name="Gas S."/>
            <person name="Barry C.E. III"/>
            <person name="Tekaia F."/>
            <person name="Badcock K."/>
            <person name="Basham D."/>
            <person name="Brown D."/>
            <person name="Chillingworth T."/>
            <person name="Connor R."/>
            <person name="Davies R.M."/>
            <person name="Devlin K."/>
            <person name="Feltwell T."/>
            <person name="Gentles S."/>
            <person name="Hamlin N."/>
            <person name="Holroyd S."/>
            <person name="Hornsby T."/>
            <person name="Jagels K."/>
            <person name="Krogh A."/>
            <person name="McLean J."/>
            <person name="Moule S."/>
            <person name="Murphy L.D."/>
            <person name="Oliver S."/>
            <person name="Osborne J."/>
            <person name="Quail M.A."/>
            <person name="Rajandream M.A."/>
            <person name="Rogers J."/>
            <person name="Rutter S."/>
            <person name="Seeger K."/>
            <person name="Skelton S."/>
            <person name="Squares S."/>
            <person name="Squares R."/>
            <person name="Sulston J.E."/>
            <person name="Taylor K."/>
            <person name="Whitehead S."/>
            <person name="Barrell B.G."/>
        </authorList>
    </citation>
    <scope>NUCLEOTIDE SEQUENCE [LARGE SCALE GENOMIC DNA]</scope>
    <source>
        <strain>ATCC 25618 / H37Rv</strain>
    </source>
</reference>
<reference key="2">
    <citation type="journal article" date="2011" name="Mol. Cell. Proteomics">
        <title>Proteogenomic analysis of Mycobacterium tuberculosis by high resolution mass spectrometry.</title>
        <authorList>
            <person name="Kelkar D.S."/>
            <person name="Kumar D."/>
            <person name="Kumar P."/>
            <person name="Balakrishnan L."/>
            <person name="Muthusamy B."/>
            <person name="Yadav A.K."/>
            <person name="Shrivastava P."/>
            <person name="Marimuthu A."/>
            <person name="Anand S."/>
            <person name="Sundaram H."/>
            <person name="Kingsbury R."/>
            <person name="Harsha H.C."/>
            <person name="Nair B."/>
            <person name="Prasad T.S."/>
            <person name="Chauhan D.S."/>
            <person name="Katoch K."/>
            <person name="Katoch V.M."/>
            <person name="Kumar P."/>
            <person name="Chaerkady R."/>
            <person name="Ramachandran S."/>
            <person name="Dash D."/>
            <person name="Pandey A."/>
        </authorList>
    </citation>
    <scope>IDENTIFICATION BY MASS SPECTROMETRY [LARGE SCALE ANALYSIS]</scope>
    <source>
        <strain>ATCC 25618 / H37Rv</strain>
    </source>
</reference>